<comment type="catalytic activity">
    <reaction evidence="3">
        <text>O-phospho-L-tyrosyl-[protein] + H2O = L-tyrosyl-[protein] + phosphate</text>
        <dbReference type="Rhea" id="RHEA:10684"/>
        <dbReference type="Rhea" id="RHEA-COMP:10136"/>
        <dbReference type="Rhea" id="RHEA-COMP:20101"/>
        <dbReference type="ChEBI" id="CHEBI:15377"/>
        <dbReference type="ChEBI" id="CHEBI:43474"/>
        <dbReference type="ChEBI" id="CHEBI:46858"/>
        <dbReference type="ChEBI" id="CHEBI:61978"/>
        <dbReference type="EC" id="3.1.3.48"/>
    </reaction>
</comment>
<comment type="similarity">
    <text evidence="4">Belongs to the protein-tyrosine phosphatase family.</text>
</comment>
<reference key="1">
    <citation type="journal article" date="1991" name="Immunogenetics">
        <title>Protein tyrosine phosphatase domains from the protochordate Styela plicata.</title>
        <authorList>
            <person name="Matthews R.J."/>
            <person name="Flores E."/>
            <person name="Thomas M.L."/>
        </authorList>
    </citation>
    <scope>NUCLEOTIDE SEQUENCE [MRNA]</scope>
</reference>
<sequence>WMMIVEQKCRVIVMLAKCFEAGKKKCQKYWPDSEETKTFGRVKVFNAEEVKYCGFLRRRFHIESFDEMMSVEVFQYQYINWPDHSVPNTTSNLVRMHKYVIQCLEEIGGDAPMVV</sequence>
<gene>
    <name type="primary">STY-23</name>
</gene>
<protein>
    <recommendedName>
        <fullName>Tyrosine-protein phosphatase 23</fullName>
        <ecNumber>3.1.3.48</ecNumber>
    </recommendedName>
</protein>
<evidence type="ECO:0000250" key="1"/>
<evidence type="ECO:0000255" key="2">
    <source>
        <dbReference type="PROSITE-ProRule" id="PRU00160"/>
    </source>
</evidence>
<evidence type="ECO:0000255" key="3">
    <source>
        <dbReference type="PROSITE-ProRule" id="PRU10044"/>
    </source>
</evidence>
<evidence type="ECO:0000305" key="4"/>
<name>PTP23_STYPL</name>
<proteinExistence type="evidence at transcript level"/>
<accession>P28215</accession>
<dbReference type="EC" id="3.1.3.48"/>
<dbReference type="EMBL" id="M38008">
    <property type="protein sequence ID" value="AAA29841.1"/>
    <property type="molecule type" value="mRNA"/>
</dbReference>
<dbReference type="SMR" id="P28215"/>
<dbReference type="GO" id="GO:0004725">
    <property type="term" value="F:protein tyrosine phosphatase activity"/>
    <property type="evidence" value="ECO:0007669"/>
    <property type="project" value="UniProtKB-EC"/>
</dbReference>
<dbReference type="CDD" id="cd00047">
    <property type="entry name" value="PTPc"/>
    <property type="match status" value="1"/>
</dbReference>
<dbReference type="Gene3D" id="3.90.190.10">
    <property type="entry name" value="Protein tyrosine phosphatase superfamily"/>
    <property type="match status" value="1"/>
</dbReference>
<dbReference type="InterPro" id="IPR029021">
    <property type="entry name" value="Prot-tyrosine_phosphatase-like"/>
</dbReference>
<dbReference type="InterPro" id="IPR050348">
    <property type="entry name" value="Protein-Tyr_Phosphatase"/>
</dbReference>
<dbReference type="InterPro" id="IPR000242">
    <property type="entry name" value="PTP_cat"/>
</dbReference>
<dbReference type="PANTHER" id="PTHR19134:SF562">
    <property type="entry name" value="PROTEIN-TYROSINE-PHOSPHATASE"/>
    <property type="match status" value="1"/>
</dbReference>
<dbReference type="PANTHER" id="PTHR19134">
    <property type="entry name" value="RECEPTOR-TYPE TYROSINE-PROTEIN PHOSPHATASE"/>
    <property type="match status" value="1"/>
</dbReference>
<dbReference type="Pfam" id="PF00102">
    <property type="entry name" value="Y_phosphatase"/>
    <property type="match status" value="1"/>
</dbReference>
<dbReference type="SUPFAM" id="SSF52799">
    <property type="entry name" value="(Phosphotyrosine protein) phosphatases II"/>
    <property type="match status" value="1"/>
</dbReference>
<dbReference type="PROSITE" id="PS50055">
    <property type="entry name" value="TYR_PHOSPHATASE_PTP"/>
    <property type="match status" value="1"/>
</dbReference>
<feature type="chain" id="PRO_0000094911" description="Tyrosine-protein phosphatase 23">
    <location>
        <begin position="1" status="less than"/>
        <end position="115" status="greater than"/>
    </location>
</feature>
<feature type="domain" description="Tyrosine-protein phosphatase" evidence="2">
    <location>
        <begin position="1" status="less than"/>
        <end position="115" status="greater than"/>
    </location>
</feature>
<feature type="binding site" evidence="1">
    <location>
        <position position="83"/>
    </location>
    <ligand>
        <name>substrate</name>
    </ligand>
</feature>
<feature type="non-terminal residue">
    <location>
        <position position="1"/>
    </location>
</feature>
<feature type="non-terminal residue">
    <location>
        <position position="115"/>
    </location>
</feature>
<keyword id="KW-0378">Hydrolase</keyword>
<keyword id="KW-0904">Protein phosphatase</keyword>
<organism>
    <name type="scientific">Styela plicata</name>
    <name type="common">Wrinkled sea squirt</name>
    <name type="synonym">Ascidia plicata</name>
    <dbReference type="NCBI Taxonomy" id="7726"/>
    <lineage>
        <taxon>Eukaryota</taxon>
        <taxon>Metazoa</taxon>
        <taxon>Chordata</taxon>
        <taxon>Tunicata</taxon>
        <taxon>Ascidiacea</taxon>
        <taxon>Stolidobranchia</taxon>
        <taxon>Styelidae</taxon>
        <taxon>Styela</taxon>
    </lineage>
</organism>